<organism>
    <name type="scientific">Oncorhynchus keta</name>
    <name type="common">Chum salmon</name>
    <name type="synonym">Salmo keta</name>
    <dbReference type="NCBI Taxonomy" id="8018"/>
    <lineage>
        <taxon>Eukaryota</taxon>
        <taxon>Metazoa</taxon>
        <taxon>Chordata</taxon>
        <taxon>Craniata</taxon>
        <taxon>Vertebrata</taxon>
        <taxon>Euteleostomi</taxon>
        <taxon>Actinopterygii</taxon>
        <taxon>Neopterygii</taxon>
        <taxon>Teleostei</taxon>
        <taxon>Protacanthopterygii</taxon>
        <taxon>Salmoniformes</taxon>
        <taxon>Salmonidae</taxon>
        <taxon>Salmoninae</taxon>
        <taxon>Oncorhynchus</taxon>
    </lineage>
</organism>
<proteinExistence type="evidence at protein level"/>
<feature type="signal peptide" evidence="1">
    <location>
        <begin position="1"/>
        <end position="24"/>
    </location>
</feature>
<feature type="chain" id="PRO_0000019120" description="Pro-MCH 1">
    <location>
        <begin position="25"/>
        <end position="132"/>
    </location>
</feature>
<feature type="peptide" id="PRO_0000019121" description="Neuropeptide-glutamic acid-valine" evidence="1">
    <location>
        <begin position="101"/>
        <end position="113"/>
    </location>
</feature>
<feature type="peptide" id="PRO_0000019122" description="Melanin-concentrating hormone" evidence="2">
    <location>
        <begin position="116"/>
        <end position="132"/>
    </location>
</feature>
<feature type="disulfide bond" evidence="2">
    <location>
        <begin position="120"/>
        <end position="129"/>
    </location>
</feature>
<feature type="sequence conflict" description="In Ref. 2; AAA49420." evidence="3" ref="2">
    <original>Y</original>
    <variation>S</variation>
    <location>
        <position position="4"/>
    </location>
</feature>
<dbReference type="EMBL" id="M27872">
    <property type="protein sequence ID" value="AAA49418.1"/>
    <property type="molecule type" value="Genomic_DNA"/>
</dbReference>
<dbReference type="EMBL" id="M23573">
    <property type="protein sequence ID" value="AAA49420.1"/>
    <property type="molecule type" value="mRNA"/>
</dbReference>
<dbReference type="PIR" id="JS0282">
    <property type="entry name" value="MTON1K"/>
</dbReference>
<dbReference type="BMRB" id="P19713"/>
<dbReference type="GO" id="GO:0045202">
    <property type="term" value="C:synapse"/>
    <property type="evidence" value="ECO:0007669"/>
    <property type="project" value="GOC"/>
</dbReference>
<dbReference type="GO" id="GO:0030354">
    <property type="term" value="F:melanin-concentrating hormone activity"/>
    <property type="evidence" value="ECO:0007669"/>
    <property type="project" value="InterPro"/>
</dbReference>
<dbReference type="GO" id="GO:0031777">
    <property type="term" value="F:type 1 melanin-concentrating hormone receptor binding"/>
    <property type="evidence" value="ECO:0007669"/>
    <property type="project" value="TreeGrafter"/>
</dbReference>
<dbReference type="GO" id="GO:0007268">
    <property type="term" value="P:chemical synaptic transmission"/>
    <property type="evidence" value="ECO:0007669"/>
    <property type="project" value="InterPro"/>
</dbReference>
<dbReference type="GO" id="GO:0007218">
    <property type="term" value="P:neuropeptide signaling pathway"/>
    <property type="evidence" value="ECO:0007669"/>
    <property type="project" value="UniProtKB-KW"/>
</dbReference>
<dbReference type="InterPro" id="IPR005456">
    <property type="entry name" value="Prepro-melanin_conc_hormone"/>
</dbReference>
<dbReference type="PANTHER" id="PTHR12091">
    <property type="entry name" value="MELANIN-CONCENTRATING HORMONE"/>
    <property type="match status" value="1"/>
</dbReference>
<dbReference type="PANTHER" id="PTHR12091:SF0">
    <property type="entry name" value="PRO-MCH"/>
    <property type="match status" value="1"/>
</dbReference>
<dbReference type="Pfam" id="PF05824">
    <property type="entry name" value="Pro-MCH"/>
    <property type="match status" value="1"/>
</dbReference>
<dbReference type="PRINTS" id="PR01641">
    <property type="entry name" value="PROMCHFAMILY"/>
</dbReference>
<keyword id="KW-0165">Cleavage on pair of basic residues</keyword>
<keyword id="KW-0903">Direct protein sequencing</keyword>
<keyword id="KW-1015">Disulfide bond</keyword>
<keyword id="KW-0372">Hormone</keyword>
<keyword id="KW-0527">Neuropeptide</keyword>
<keyword id="KW-0732">Signal</keyword>
<evidence type="ECO:0000255" key="1"/>
<evidence type="ECO:0000269" key="2">
    <source>
    </source>
</evidence>
<evidence type="ECO:0000305" key="3"/>
<reference key="1">
    <citation type="journal article" date="1989" name="Gene">
        <title>Structures of two genes coding for melanin-concentrating hormone of chum salmon.</title>
        <authorList>
            <person name="Takayama Y."/>
            <person name="Wada C."/>
            <person name="Kawauchi H."/>
            <person name="Ono M."/>
        </authorList>
    </citation>
    <scope>NUCLEOTIDE SEQUENCE [GENOMIC DNA]</scope>
</reference>
<reference key="2">
    <citation type="journal article" date="1988" name="Gene">
        <title>Structures of two kinds of mRNA encoding the chum salmon melanin-concentrating hormone.</title>
        <authorList>
            <person name="Ono M."/>
            <person name="Wada C."/>
            <person name="Oikawa I."/>
            <person name="Kawazoe I."/>
            <person name="Kawauchi H."/>
        </authorList>
    </citation>
    <scope>NUCLEOTIDE SEQUENCE [MRNA]</scope>
</reference>
<reference key="3">
    <citation type="journal article" date="1983" name="Nature">
        <title>Characterization of melanin-concentrating hormone in chum salmon pituitaries.</title>
        <authorList>
            <person name="Kawauchi H."/>
            <person name="Kawazoe I."/>
            <person name="Tsubokawa M."/>
            <person name="Kishida M."/>
            <person name="Baker B.I."/>
        </authorList>
    </citation>
    <scope>PROTEIN SEQUENCE OF 116-132</scope>
</reference>
<protein>
    <recommendedName>
        <fullName>Pro-MCH 1</fullName>
    </recommendedName>
    <component>
        <recommendedName>
            <fullName>Neuropeptide-glutamic acid-valine</fullName>
        </recommendedName>
        <alternativeName>
            <fullName>Neuropeptide E-V</fullName>
            <shortName>NEV</shortName>
        </alternativeName>
    </component>
    <component>
        <recommendedName>
            <fullName>Melanin-concentrating hormone</fullName>
            <shortName>MCH</shortName>
        </recommendedName>
    </component>
</protein>
<comment type="function">
    <text>Plays a role in skin pigmentation by antagonizing the action of melanotropin alpha. Induces melanin concentration within the melanophores. May participate in the control of the hypothalamo-pituitary adrenal gland axis by inhibiting the release of ACTH.</text>
</comment>
<comment type="tissue specificity">
    <text>Pituitary gland. Produced in neurons of lateral basal hypothalamus which project both to the brain and to the neural lobe of the pituitary gland from where MCH is released.</text>
</comment>
<comment type="similarity">
    <text evidence="3">Belongs to the melanin-concentrating hormone family.</text>
</comment>
<sequence length="132" mass="14682">MRHYVLSISFAVALFLECYTPSTAISIGKMDDVALEQDTLDSLLSVEVSENSPDSVRGRSSKIVLLADSGLWMNLNRGLPFYKLRAAAAGPDRALTLDRREAGQDLSPSISIVRRDTMRCMVGRVYRPCWEV</sequence>
<gene>
    <name type="primary">mch1</name>
</gene>
<accession>P19713</accession>
<accession>P01208</accession>
<name>MCH1_ONCKE</name>